<geneLocation type="chloroplast"/>
<comment type="function">
    <text evidence="1">Binds to 23S rRNA.</text>
</comment>
<comment type="subunit">
    <text evidence="1">Part of the 50S ribosomal subunit.</text>
</comment>
<comment type="subcellular location">
    <subcellularLocation>
        <location>Plastid</location>
        <location>Chloroplast</location>
    </subcellularLocation>
</comment>
<comment type="similarity">
    <text evidence="1">Belongs to the universal ribosomal protein uL14 family.</text>
</comment>
<proteinExistence type="inferred from homology"/>
<dbReference type="EMBL" id="EF587358">
    <property type="protein sequence ID" value="ABU88198.1"/>
    <property type="molecule type" value="Genomic_DNA"/>
</dbReference>
<dbReference type="EMBL" id="EU677193">
    <property type="protein sequence ID" value="ACC97240.1"/>
    <property type="molecule type" value="Genomic_DNA"/>
</dbReference>
<dbReference type="RefSeq" id="YP_002000389.1">
    <property type="nucleotide sequence ID" value="NC_011031.1"/>
</dbReference>
<dbReference type="SMR" id="B2X1Y5"/>
<dbReference type="GeneID" id="6440092"/>
<dbReference type="GO" id="GO:0009507">
    <property type="term" value="C:chloroplast"/>
    <property type="evidence" value="ECO:0007669"/>
    <property type="project" value="UniProtKB-SubCell"/>
</dbReference>
<dbReference type="GO" id="GO:0022625">
    <property type="term" value="C:cytosolic large ribosomal subunit"/>
    <property type="evidence" value="ECO:0007669"/>
    <property type="project" value="TreeGrafter"/>
</dbReference>
<dbReference type="GO" id="GO:0070180">
    <property type="term" value="F:large ribosomal subunit rRNA binding"/>
    <property type="evidence" value="ECO:0007669"/>
    <property type="project" value="TreeGrafter"/>
</dbReference>
<dbReference type="GO" id="GO:0003735">
    <property type="term" value="F:structural constituent of ribosome"/>
    <property type="evidence" value="ECO:0007669"/>
    <property type="project" value="InterPro"/>
</dbReference>
<dbReference type="GO" id="GO:0006412">
    <property type="term" value="P:translation"/>
    <property type="evidence" value="ECO:0007669"/>
    <property type="project" value="UniProtKB-UniRule"/>
</dbReference>
<dbReference type="CDD" id="cd00337">
    <property type="entry name" value="Ribosomal_uL14"/>
    <property type="match status" value="1"/>
</dbReference>
<dbReference type="FunFam" id="2.40.150.20:FF:000021">
    <property type="entry name" value="Ribosomal protein L14"/>
    <property type="match status" value="1"/>
</dbReference>
<dbReference type="Gene3D" id="2.40.150.20">
    <property type="entry name" value="Ribosomal protein L14"/>
    <property type="match status" value="1"/>
</dbReference>
<dbReference type="HAMAP" id="MF_01367">
    <property type="entry name" value="Ribosomal_uL14"/>
    <property type="match status" value="1"/>
</dbReference>
<dbReference type="InterPro" id="IPR000218">
    <property type="entry name" value="Ribosomal_uL14"/>
</dbReference>
<dbReference type="InterPro" id="IPR005745">
    <property type="entry name" value="Ribosomal_uL14_bac-type"/>
</dbReference>
<dbReference type="InterPro" id="IPR019972">
    <property type="entry name" value="Ribosomal_uL14_CS"/>
</dbReference>
<dbReference type="InterPro" id="IPR036853">
    <property type="entry name" value="Ribosomal_uL14_sf"/>
</dbReference>
<dbReference type="NCBIfam" id="TIGR01067">
    <property type="entry name" value="rplN_bact"/>
    <property type="match status" value="1"/>
</dbReference>
<dbReference type="PANTHER" id="PTHR11761">
    <property type="entry name" value="50S/60S RIBOSOMAL PROTEIN L14/L23"/>
    <property type="match status" value="1"/>
</dbReference>
<dbReference type="PANTHER" id="PTHR11761:SF3">
    <property type="entry name" value="LARGE RIBOSOMAL SUBUNIT PROTEIN UL14M"/>
    <property type="match status" value="1"/>
</dbReference>
<dbReference type="Pfam" id="PF00238">
    <property type="entry name" value="Ribosomal_L14"/>
    <property type="match status" value="1"/>
</dbReference>
<dbReference type="SMART" id="SM01374">
    <property type="entry name" value="Ribosomal_L14"/>
    <property type="match status" value="1"/>
</dbReference>
<dbReference type="SUPFAM" id="SSF50193">
    <property type="entry name" value="Ribosomal protein L14"/>
    <property type="match status" value="1"/>
</dbReference>
<dbReference type="PROSITE" id="PS00049">
    <property type="entry name" value="RIBOSOMAL_L14"/>
    <property type="match status" value="1"/>
</dbReference>
<accession>B2X1Y5</accession>
<reference key="1">
    <citation type="journal article" date="2008" name="J. Phycol.">
        <title>Deep division in the Chlorophyceae (Chlorophyta) revealed by chloroplast phylogenomic analyseS.</title>
        <authorList>
            <person name="Turmel M."/>
            <person name="Brouard J.-S."/>
            <person name="Gagnon C."/>
            <person name="Otis C."/>
            <person name="Lemieux C."/>
        </authorList>
        <dbReference type="AGRICOLA" id="IND44059346"/>
    </citation>
    <scope>NUCLEOTIDE SEQUENCE [GENOMIC DNA]</scope>
    <source>
        <strain>SAG 575-1b / CCAP 575/1B / UTEX LB 40</strain>
    </source>
</reference>
<reference key="2">
    <citation type="journal article" date="2008" name="BMC Genomics">
        <title>Chloroplast DNA sequence of the green alga Oedogonium cardiacum (Chlorophyceae): unique genome architecture, derived characters shared with the Chaetophorales and novel genes acquired through horizontal transfer.</title>
        <authorList>
            <person name="Brouard J.-S."/>
            <person name="Otis C."/>
            <person name="Lemieux C."/>
            <person name="Turmel M."/>
        </authorList>
    </citation>
    <scope>NUCLEOTIDE SEQUENCE [LARGE SCALE GENOMIC DNA]</scope>
    <source>
        <strain>SAG 575-1b / CCAP 575/1B / UTEX LB 40</strain>
    </source>
</reference>
<evidence type="ECO:0000255" key="1">
    <source>
        <dbReference type="HAMAP-Rule" id="MF_01367"/>
    </source>
</evidence>
<evidence type="ECO:0000305" key="2"/>
<gene>
    <name evidence="1" type="primary">rpl14</name>
</gene>
<keyword id="KW-0150">Chloroplast</keyword>
<keyword id="KW-0934">Plastid</keyword>
<keyword id="KW-0687">Ribonucleoprotein</keyword>
<keyword id="KW-0689">Ribosomal protein</keyword>
<keyword id="KW-0694">RNA-binding</keyword>
<keyword id="KW-0699">rRNA-binding</keyword>
<name>RK14_OEDCA</name>
<organism>
    <name type="scientific">Oedogonium cardiacum</name>
    <name type="common">Filamentous green alga</name>
    <dbReference type="NCBI Taxonomy" id="55995"/>
    <lineage>
        <taxon>Eukaryota</taxon>
        <taxon>Viridiplantae</taxon>
        <taxon>Chlorophyta</taxon>
        <taxon>core chlorophytes</taxon>
        <taxon>Chlorophyceae</taxon>
        <taxon>OCC clade</taxon>
        <taxon>Oedogoniales</taxon>
        <taxon>Oedogoniaceae</taxon>
        <taxon>Oedogonium</taxon>
    </lineage>
</organism>
<sequence length="121" mass="13138">MIQPQSFLNVADNSGARKLMCIRVLGGGNQSANIGNIIIAVVKDAIPNTAFKKSDIVRAVIVRTKKGIKRENGMTIRFDDNAAVVINKEGNPRGTRVFGPIARELRDQNLTKILSLAPEVV</sequence>
<protein>
    <recommendedName>
        <fullName evidence="1">Large ribosomal subunit protein uL14c</fullName>
    </recommendedName>
    <alternativeName>
        <fullName evidence="2">50S ribosomal protein L14, chloroplastic</fullName>
    </alternativeName>
</protein>
<feature type="chain" id="PRO_0000355893" description="Large ribosomal subunit protein uL14c">
    <location>
        <begin position="1"/>
        <end position="121"/>
    </location>
</feature>